<gene>
    <name type="ORF">SPCC24B10.02c</name>
</gene>
<reference key="1">
    <citation type="journal article" date="2002" name="Nature">
        <title>The genome sequence of Schizosaccharomyces pombe.</title>
        <authorList>
            <person name="Wood V."/>
            <person name="Gwilliam R."/>
            <person name="Rajandream M.A."/>
            <person name="Lyne M.H."/>
            <person name="Lyne R."/>
            <person name="Stewart A."/>
            <person name="Sgouros J.G."/>
            <person name="Peat N."/>
            <person name="Hayles J."/>
            <person name="Baker S.G."/>
            <person name="Basham D."/>
            <person name="Bowman S."/>
            <person name="Brooks K."/>
            <person name="Brown D."/>
            <person name="Brown S."/>
            <person name="Chillingworth T."/>
            <person name="Churcher C.M."/>
            <person name="Collins M."/>
            <person name="Connor R."/>
            <person name="Cronin A."/>
            <person name="Davis P."/>
            <person name="Feltwell T."/>
            <person name="Fraser A."/>
            <person name="Gentles S."/>
            <person name="Goble A."/>
            <person name="Hamlin N."/>
            <person name="Harris D.E."/>
            <person name="Hidalgo J."/>
            <person name="Hodgson G."/>
            <person name="Holroyd S."/>
            <person name="Hornsby T."/>
            <person name="Howarth S."/>
            <person name="Huckle E.J."/>
            <person name="Hunt S."/>
            <person name="Jagels K."/>
            <person name="James K.D."/>
            <person name="Jones L."/>
            <person name="Jones M."/>
            <person name="Leather S."/>
            <person name="McDonald S."/>
            <person name="McLean J."/>
            <person name="Mooney P."/>
            <person name="Moule S."/>
            <person name="Mungall K.L."/>
            <person name="Murphy L.D."/>
            <person name="Niblett D."/>
            <person name="Odell C."/>
            <person name="Oliver K."/>
            <person name="O'Neil S."/>
            <person name="Pearson D."/>
            <person name="Quail M.A."/>
            <person name="Rabbinowitsch E."/>
            <person name="Rutherford K.M."/>
            <person name="Rutter S."/>
            <person name="Saunders D."/>
            <person name="Seeger K."/>
            <person name="Sharp S."/>
            <person name="Skelton J."/>
            <person name="Simmonds M.N."/>
            <person name="Squares R."/>
            <person name="Squares S."/>
            <person name="Stevens K."/>
            <person name="Taylor K."/>
            <person name="Taylor R.G."/>
            <person name="Tivey A."/>
            <person name="Walsh S.V."/>
            <person name="Warren T."/>
            <person name="Whitehead S."/>
            <person name="Woodward J.R."/>
            <person name="Volckaert G."/>
            <person name="Aert R."/>
            <person name="Robben J."/>
            <person name="Grymonprez B."/>
            <person name="Weltjens I."/>
            <person name="Vanstreels E."/>
            <person name="Rieger M."/>
            <person name="Schaefer M."/>
            <person name="Mueller-Auer S."/>
            <person name="Gabel C."/>
            <person name="Fuchs M."/>
            <person name="Duesterhoeft A."/>
            <person name="Fritzc C."/>
            <person name="Holzer E."/>
            <person name="Moestl D."/>
            <person name="Hilbert H."/>
            <person name="Borzym K."/>
            <person name="Langer I."/>
            <person name="Beck A."/>
            <person name="Lehrach H."/>
            <person name="Reinhardt R."/>
            <person name="Pohl T.M."/>
            <person name="Eger P."/>
            <person name="Zimmermann W."/>
            <person name="Wedler H."/>
            <person name="Wambutt R."/>
            <person name="Purnelle B."/>
            <person name="Goffeau A."/>
            <person name="Cadieu E."/>
            <person name="Dreano S."/>
            <person name="Gloux S."/>
            <person name="Lelaure V."/>
            <person name="Mottier S."/>
            <person name="Galibert F."/>
            <person name="Aves S.J."/>
            <person name="Xiang Z."/>
            <person name="Hunt C."/>
            <person name="Moore K."/>
            <person name="Hurst S.M."/>
            <person name="Lucas M."/>
            <person name="Rochet M."/>
            <person name="Gaillardin C."/>
            <person name="Tallada V.A."/>
            <person name="Garzon A."/>
            <person name="Thode G."/>
            <person name="Daga R.R."/>
            <person name="Cruzado L."/>
            <person name="Jimenez J."/>
            <person name="Sanchez M."/>
            <person name="del Rey F."/>
            <person name="Benito J."/>
            <person name="Dominguez A."/>
            <person name="Revuelta J.L."/>
            <person name="Moreno S."/>
            <person name="Armstrong J."/>
            <person name="Forsburg S.L."/>
            <person name="Cerutti L."/>
            <person name="Lowe T."/>
            <person name="McCombie W.R."/>
            <person name="Paulsen I."/>
            <person name="Potashkin J."/>
            <person name="Shpakovski G.V."/>
            <person name="Ussery D."/>
            <person name="Barrell B.G."/>
            <person name="Nurse P."/>
        </authorList>
    </citation>
    <scope>NUCLEOTIDE SEQUENCE [LARGE SCALE GENOMIC DNA]</scope>
    <source>
        <strain>972 / ATCC 24843</strain>
    </source>
</reference>
<reference key="2">
    <citation type="journal article" date="2006" name="Nat. Biotechnol.">
        <title>ORFeome cloning and global analysis of protein localization in the fission yeast Schizosaccharomyces pombe.</title>
        <authorList>
            <person name="Matsuyama A."/>
            <person name="Arai R."/>
            <person name="Yashiroda Y."/>
            <person name="Shirai A."/>
            <person name="Kamata A."/>
            <person name="Sekido S."/>
            <person name="Kobayashi Y."/>
            <person name="Hashimoto A."/>
            <person name="Hamamoto M."/>
            <person name="Hiraoka Y."/>
            <person name="Horinouchi S."/>
            <person name="Yoshida M."/>
        </authorList>
    </citation>
    <scope>SUBCELLULAR LOCATION [LARGE SCALE ANALYSIS]</scope>
</reference>
<reference key="3">
    <citation type="journal article" date="2008" name="J. Proteome Res.">
        <title>Phosphoproteome analysis of fission yeast.</title>
        <authorList>
            <person name="Wilson-Grady J.T."/>
            <person name="Villen J."/>
            <person name="Gygi S.P."/>
        </authorList>
    </citation>
    <scope>PHOSPHORYLATION [LARGE SCALE ANALYSIS] AT SER-420</scope>
    <scope>IDENTIFICATION BY MASS SPECTROMETRY</scope>
</reference>
<protein>
    <recommendedName>
        <fullName>Uncharacterized kinase C24B10.02c</fullName>
        <ecNumber>2.7.1.-</ecNumber>
    </recommendedName>
</protein>
<sequence>MATKVEEINKLKKKNLHFRQCSADSLSNSSMQFDLSGLNTPVGELATSNLPSPAHPPFGELHQESRTSNSSAMHIENVVASRLMYNEVANGSFALEPKNILVVTKPRKHSLVYKTAEITKYILTIGTPETKVYVDMRLARSKRFSAHNIAKEANTDIDRIKYWNPYICLIKPSIFDLAITIGDNSTLLYTSWLFQKIGPPVLSFSDDDVPGFLTHFSLSNYQQHLYQVLTQNVSLRFCSRLQCSFHKYDEKTKQYSLASTTYSLDEILISRGEHPFISNLNVYNNSELMTVVQADGLVVATPTGSTNISANAGGSLVHPALNAILVTPVCPHTLSFRPIILPDYNVLNVEIPLDSRSSAFFSVDRHESVEMHRGDYLSIVTSHYPFTTIQNPGYQWTKVLEDKFNWNVRERQKPFSRKPSLSDVKDTSDDKFDITDNSYCREFSADIDG</sequence>
<proteinExistence type="evidence at protein level"/>
<accession>Q9P7K3</accession>
<feature type="chain" id="PRO_0000316602" description="Uncharacterized kinase C24B10.02c">
    <location>
        <begin position="1"/>
        <end position="449"/>
    </location>
</feature>
<feature type="modified residue" description="Phosphoserine" evidence="2">
    <location>
        <position position="420"/>
    </location>
</feature>
<organism>
    <name type="scientific">Schizosaccharomyces pombe (strain 972 / ATCC 24843)</name>
    <name type="common">Fission yeast</name>
    <dbReference type="NCBI Taxonomy" id="284812"/>
    <lineage>
        <taxon>Eukaryota</taxon>
        <taxon>Fungi</taxon>
        <taxon>Dikarya</taxon>
        <taxon>Ascomycota</taxon>
        <taxon>Taphrinomycotina</taxon>
        <taxon>Schizosaccharomycetes</taxon>
        <taxon>Schizosaccharomycetales</taxon>
        <taxon>Schizosaccharomycetaceae</taxon>
        <taxon>Schizosaccharomyces</taxon>
    </lineage>
</organism>
<comment type="subcellular location">
    <subcellularLocation>
        <location evidence="1">Cytoplasm</location>
    </subcellularLocation>
    <subcellularLocation>
        <location evidence="1">Nucleus</location>
    </subcellularLocation>
</comment>
<comment type="similarity">
    <text evidence="3">Belongs to the NAD kinase family.</text>
</comment>
<evidence type="ECO:0000269" key="1">
    <source>
    </source>
</evidence>
<evidence type="ECO:0000269" key="2">
    <source>
    </source>
</evidence>
<evidence type="ECO:0000305" key="3"/>
<keyword id="KW-0963">Cytoplasm</keyword>
<keyword id="KW-0418">Kinase</keyword>
<keyword id="KW-0520">NAD</keyword>
<keyword id="KW-0521">NADP</keyword>
<keyword id="KW-0539">Nucleus</keyword>
<keyword id="KW-0597">Phosphoprotein</keyword>
<keyword id="KW-1185">Reference proteome</keyword>
<keyword id="KW-0808">Transferase</keyword>
<name>YJN2_SCHPO</name>
<dbReference type="EC" id="2.7.1.-"/>
<dbReference type="EMBL" id="CU329672">
    <property type="protein sequence ID" value="CAB76211.1"/>
    <property type="molecule type" value="Genomic_DNA"/>
</dbReference>
<dbReference type="PIR" id="T50409">
    <property type="entry name" value="T50409"/>
</dbReference>
<dbReference type="RefSeq" id="NP_588005.1">
    <property type="nucleotide sequence ID" value="NM_001022996.2"/>
</dbReference>
<dbReference type="SMR" id="Q9P7K3"/>
<dbReference type="BioGRID" id="275821">
    <property type="interactions" value="6"/>
</dbReference>
<dbReference type="FunCoup" id="Q9P7K3">
    <property type="interactions" value="138"/>
</dbReference>
<dbReference type="STRING" id="284812.Q9P7K3"/>
<dbReference type="iPTMnet" id="Q9P7K3"/>
<dbReference type="PaxDb" id="4896-SPCC24B10.02c.1"/>
<dbReference type="EnsemblFungi" id="SPCC24B10.02c.1">
    <property type="protein sequence ID" value="SPCC24B10.02c.1:pep"/>
    <property type="gene ID" value="SPCC24B10.02c"/>
</dbReference>
<dbReference type="KEGG" id="spo:2539251"/>
<dbReference type="PomBase" id="SPCC24B10.02c"/>
<dbReference type="VEuPathDB" id="FungiDB:SPCC24B10.02c"/>
<dbReference type="eggNOG" id="KOG2178">
    <property type="taxonomic scope" value="Eukaryota"/>
</dbReference>
<dbReference type="HOGENOM" id="CLU_008831_10_3_1"/>
<dbReference type="InParanoid" id="Q9P7K3"/>
<dbReference type="OMA" id="SRLECSY"/>
<dbReference type="PhylomeDB" id="Q9P7K3"/>
<dbReference type="PRO" id="PR:Q9P7K3"/>
<dbReference type="Proteomes" id="UP000002485">
    <property type="component" value="Chromosome III"/>
</dbReference>
<dbReference type="GO" id="GO:0005829">
    <property type="term" value="C:cytosol"/>
    <property type="evidence" value="ECO:0007005"/>
    <property type="project" value="PomBase"/>
</dbReference>
<dbReference type="GO" id="GO:0005634">
    <property type="term" value="C:nucleus"/>
    <property type="evidence" value="ECO:0007005"/>
    <property type="project" value="PomBase"/>
</dbReference>
<dbReference type="GO" id="GO:0003951">
    <property type="term" value="F:NAD+ kinase activity"/>
    <property type="evidence" value="ECO:0000318"/>
    <property type="project" value="GO_Central"/>
</dbReference>
<dbReference type="GO" id="GO:0019674">
    <property type="term" value="P:NAD metabolic process"/>
    <property type="evidence" value="ECO:0000266"/>
    <property type="project" value="PomBase"/>
</dbReference>
<dbReference type="GO" id="GO:0006741">
    <property type="term" value="P:NADP biosynthetic process"/>
    <property type="evidence" value="ECO:0000318"/>
    <property type="project" value="GO_Central"/>
</dbReference>
<dbReference type="Gene3D" id="3.40.50.10330">
    <property type="entry name" value="Probable inorganic polyphosphate/atp-NAD kinase, domain 1"/>
    <property type="match status" value="1"/>
</dbReference>
<dbReference type="Gene3D" id="2.60.200.30">
    <property type="entry name" value="Probable inorganic polyphosphate/atp-NAD kinase, domain 2"/>
    <property type="match status" value="1"/>
</dbReference>
<dbReference type="HAMAP" id="MF_00361">
    <property type="entry name" value="NAD_kinase"/>
    <property type="match status" value="1"/>
</dbReference>
<dbReference type="InterPro" id="IPR017438">
    <property type="entry name" value="ATP-NAD_kinase_N"/>
</dbReference>
<dbReference type="InterPro" id="IPR017437">
    <property type="entry name" value="ATP-NAD_kinase_PpnK-typ_C"/>
</dbReference>
<dbReference type="InterPro" id="IPR016064">
    <property type="entry name" value="NAD/diacylglycerol_kinase_sf"/>
</dbReference>
<dbReference type="InterPro" id="IPR002504">
    <property type="entry name" value="NADK"/>
</dbReference>
<dbReference type="PANTHER" id="PTHR20275">
    <property type="entry name" value="NAD KINASE"/>
    <property type="match status" value="1"/>
</dbReference>
<dbReference type="PANTHER" id="PTHR20275:SF0">
    <property type="entry name" value="NAD KINASE"/>
    <property type="match status" value="1"/>
</dbReference>
<dbReference type="Pfam" id="PF01513">
    <property type="entry name" value="NAD_kinase"/>
    <property type="match status" value="1"/>
</dbReference>
<dbReference type="Pfam" id="PF20143">
    <property type="entry name" value="NAD_kinase_C"/>
    <property type="match status" value="1"/>
</dbReference>
<dbReference type="SUPFAM" id="SSF111331">
    <property type="entry name" value="NAD kinase/diacylglycerol kinase-like"/>
    <property type="match status" value="1"/>
</dbReference>